<dbReference type="EC" id="6.3.2.31" evidence="1"/>
<dbReference type="EC" id="6.3.2.34" evidence="1"/>
<dbReference type="EMBL" id="CP000099">
    <property type="protein sequence ID" value="AAZ69830.1"/>
    <property type="molecule type" value="Genomic_DNA"/>
</dbReference>
<dbReference type="SMR" id="Q46E62"/>
<dbReference type="STRING" id="269797.Mbar_A0855"/>
<dbReference type="PaxDb" id="269797-Mbar_A0855"/>
<dbReference type="KEGG" id="mba:Mbar_A0855"/>
<dbReference type="eggNOG" id="arCOG02714">
    <property type="taxonomic scope" value="Archaea"/>
</dbReference>
<dbReference type="HOGENOM" id="CLU_051152_1_1_2"/>
<dbReference type="OrthoDB" id="11383at2157"/>
<dbReference type="UniPathway" id="UPA00071"/>
<dbReference type="GO" id="GO:0052618">
    <property type="term" value="F:coenzyme F420-0:L-glutamate ligase activity"/>
    <property type="evidence" value="ECO:0007669"/>
    <property type="project" value="UniProtKB-UniRule"/>
</dbReference>
<dbReference type="GO" id="GO:0052619">
    <property type="term" value="F:coenzyme F420-1:gamma-L-glutamate ligase activity"/>
    <property type="evidence" value="ECO:0007669"/>
    <property type="project" value="UniProtKB-UniRule"/>
</dbReference>
<dbReference type="GO" id="GO:0005525">
    <property type="term" value="F:GTP binding"/>
    <property type="evidence" value="ECO:0007669"/>
    <property type="project" value="UniProtKB-KW"/>
</dbReference>
<dbReference type="GO" id="GO:0046872">
    <property type="term" value="F:metal ion binding"/>
    <property type="evidence" value="ECO:0007669"/>
    <property type="project" value="UniProtKB-KW"/>
</dbReference>
<dbReference type="GO" id="GO:0052645">
    <property type="term" value="P:F420-0 metabolic process"/>
    <property type="evidence" value="ECO:0007669"/>
    <property type="project" value="UniProtKB-UniRule"/>
</dbReference>
<dbReference type="Gene3D" id="3.30.1330.100">
    <property type="entry name" value="CofE-like"/>
    <property type="match status" value="1"/>
</dbReference>
<dbReference type="Gene3D" id="3.90.1660.10">
    <property type="entry name" value="CofE-like domain"/>
    <property type="match status" value="1"/>
</dbReference>
<dbReference type="HAMAP" id="MF_01258">
    <property type="entry name" value="F420_ligase_CofE"/>
    <property type="match status" value="1"/>
</dbReference>
<dbReference type="InterPro" id="IPR008225">
    <property type="entry name" value="F420-0_g-glutamyl_ligase"/>
</dbReference>
<dbReference type="InterPro" id="IPR002847">
    <property type="entry name" value="F420-0_gamma-glut_ligase-dom"/>
</dbReference>
<dbReference type="InterPro" id="IPR023659">
    <property type="entry name" value="F420_ligase_CofE_arc"/>
</dbReference>
<dbReference type="NCBIfam" id="TIGR01916">
    <property type="entry name" value="F420_cofE"/>
    <property type="match status" value="1"/>
</dbReference>
<dbReference type="NCBIfam" id="NF009809">
    <property type="entry name" value="PRK13293.1"/>
    <property type="match status" value="1"/>
</dbReference>
<dbReference type="PANTHER" id="PTHR47917">
    <property type="match status" value="1"/>
</dbReference>
<dbReference type="PANTHER" id="PTHR47917:SF1">
    <property type="entry name" value="COENZYME F420:L-GLUTAMATE LIGASE"/>
    <property type="match status" value="1"/>
</dbReference>
<dbReference type="Pfam" id="PF01996">
    <property type="entry name" value="F420_ligase"/>
    <property type="match status" value="1"/>
</dbReference>
<dbReference type="SUPFAM" id="SSF144010">
    <property type="entry name" value="CofE-like"/>
    <property type="match status" value="1"/>
</dbReference>
<reference key="1">
    <citation type="journal article" date="2006" name="J. Bacteriol.">
        <title>The Methanosarcina barkeri genome: comparative analysis with Methanosarcina acetivorans and Methanosarcina mazei reveals extensive rearrangement within methanosarcinal genomes.</title>
        <authorList>
            <person name="Maeder D.L."/>
            <person name="Anderson I."/>
            <person name="Brettin T.S."/>
            <person name="Bruce D.C."/>
            <person name="Gilna P."/>
            <person name="Han C.S."/>
            <person name="Lapidus A."/>
            <person name="Metcalf W.W."/>
            <person name="Saunders E."/>
            <person name="Tapia R."/>
            <person name="Sowers K.R."/>
        </authorList>
    </citation>
    <scope>NUCLEOTIDE SEQUENCE [LARGE SCALE GENOMIC DNA]</scope>
    <source>
        <strain>Fusaro / DSM 804</strain>
    </source>
</reference>
<sequence>MKFEAIAVENIPLIHTGDDLPSIICKNLELQDRDIVIVASTIVAKAEGKVFRLEDITPGKVALEMASRNGKDARFIQAVLSLSREVLVEKPFMLVTTLAGHTCVNAGIDESNIEDGFLLYPPENSDASASRLGQELETLSGKKLSVIVTDTNGRAFKIGQTGAAIGIYKIKPVKHWIGEKDLFGKVLEVAEEAIADELAGAANLLMGEGAGGTPVVVIRGFDYYCEEETFIKEMYRPEEMDVIKKGLRCLQKRVE</sequence>
<proteinExistence type="inferred from homology"/>
<feature type="chain" id="PRO_1000067257" description="Coenzyme F420:L-glutamate ligase">
    <location>
        <begin position="1"/>
        <end position="255"/>
    </location>
</feature>
<feature type="binding site" evidence="1">
    <location>
        <begin position="11"/>
        <end position="14"/>
    </location>
    <ligand>
        <name>GTP</name>
        <dbReference type="ChEBI" id="CHEBI:37565"/>
    </ligand>
</feature>
<feature type="binding site" evidence="1">
    <location>
        <begin position="40"/>
        <end position="41"/>
    </location>
    <ligand>
        <name>GTP</name>
        <dbReference type="ChEBI" id="CHEBI:37565"/>
    </ligand>
</feature>
<feature type="binding site" evidence="1">
    <location>
        <position position="45"/>
    </location>
    <ligand>
        <name>GTP</name>
        <dbReference type="ChEBI" id="CHEBI:37565"/>
    </ligand>
</feature>
<feature type="binding site" evidence="1">
    <location>
        <position position="109"/>
    </location>
    <ligand>
        <name>a divalent metal cation</name>
        <dbReference type="ChEBI" id="CHEBI:60240"/>
        <label>1</label>
    </ligand>
</feature>
<feature type="binding site" evidence="1">
    <location>
        <position position="112"/>
    </location>
    <ligand>
        <name>GTP</name>
        <dbReference type="ChEBI" id="CHEBI:37565"/>
    </ligand>
</feature>
<feature type="binding site" evidence="1">
    <location>
        <position position="150"/>
    </location>
    <ligand>
        <name>a divalent metal cation</name>
        <dbReference type="ChEBI" id="CHEBI:60240"/>
        <label>1</label>
    </ligand>
</feature>
<feature type="binding site" evidence="1">
    <location>
        <position position="151"/>
    </location>
    <ligand>
        <name>a divalent metal cation</name>
        <dbReference type="ChEBI" id="CHEBI:60240"/>
        <label>2</label>
    </ligand>
</feature>
<feature type="binding site" evidence="1">
    <location>
        <begin position="206"/>
        <end position="213"/>
    </location>
    <ligand>
        <name>GTP</name>
        <dbReference type="ChEBI" id="CHEBI:37565"/>
    </ligand>
</feature>
<feature type="binding site" evidence="1">
    <location>
        <position position="208"/>
    </location>
    <ligand>
        <name>a divalent metal cation</name>
        <dbReference type="ChEBI" id="CHEBI:60240"/>
        <label>2</label>
    </ligand>
</feature>
<keyword id="KW-0342">GTP-binding</keyword>
<keyword id="KW-0436">Ligase</keyword>
<keyword id="KW-0460">Magnesium</keyword>
<keyword id="KW-0464">Manganese</keyword>
<keyword id="KW-0479">Metal-binding</keyword>
<keyword id="KW-0547">Nucleotide-binding</keyword>
<keyword id="KW-0630">Potassium</keyword>
<evidence type="ECO:0000255" key="1">
    <source>
        <dbReference type="HAMAP-Rule" id="MF_01258"/>
    </source>
</evidence>
<protein>
    <recommendedName>
        <fullName evidence="1">Coenzyme F420:L-glutamate ligase</fullName>
        <ecNumber evidence="1">6.3.2.31</ecNumber>
        <ecNumber evidence="1">6.3.2.34</ecNumber>
    </recommendedName>
    <alternativeName>
        <fullName evidence="1">Coenzyme F420-0:L-glutamate ligase</fullName>
    </alternativeName>
    <alternativeName>
        <fullName evidence="1">Coenzyme F420-1:gamma-L-glutamate ligase</fullName>
    </alternativeName>
</protein>
<name>COFE_METBF</name>
<gene>
    <name evidence="1" type="primary">cofE</name>
    <name type="ordered locus">Mbar_A0855</name>
</gene>
<accession>Q46E62</accession>
<organism>
    <name type="scientific">Methanosarcina barkeri (strain Fusaro / DSM 804)</name>
    <dbReference type="NCBI Taxonomy" id="269797"/>
    <lineage>
        <taxon>Archaea</taxon>
        <taxon>Methanobacteriati</taxon>
        <taxon>Methanobacteriota</taxon>
        <taxon>Stenosarchaea group</taxon>
        <taxon>Methanomicrobia</taxon>
        <taxon>Methanosarcinales</taxon>
        <taxon>Methanosarcinaceae</taxon>
        <taxon>Methanosarcina</taxon>
    </lineage>
</organism>
<comment type="function">
    <text evidence="1">Catalyzes the GTP-dependent successive addition of two or more gamma-linked L-glutamates to the L-lactyl phosphodiester of 7,8-didemethyl-8-hydroxy-5-deazariboflavin (F420-0) to form coenzyme F420-0-glutamyl-glutamate (F420-2) or polyglutamated F420 derivatives.</text>
</comment>
<comment type="catalytic activity">
    <reaction evidence="1">
        <text>oxidized coenzyme F420-0 + GTP + L-glutamate = oxidized coenzyme F420-1 + GDP + phosphate + H(+)</text>
        <dbReference type="Rhea" id="RHEA:30555"/>
        <dbReference type="ChEBI" id="CHEBI:15378"/>
        <dbReference type="ChEBI" id="CHEBI:29985"/>
        <dbReference type="ChEBI" id="CHEBI:37565"/>
        <dbReference type="ChEBI" id="CHEBI:43474"/>
        <dbReference type="ChEBI" id="CHEBI:58189"/>
        <dbReference type="ChEBI" id="CHEBI:59907"/>
        <dbReference type="ChEBI" id="CHEBI:59920"/>
        <dbReference type="EC" id="6.3.2.31"/>
    </reaction>
</comment>
<comment type="catalytic activity">
    <reaction evidence="1">
        <text>oxidized coenzyme F420-1 + GTP + L-glutamate = oxidized coenzyme F420-2 + GDP + phosphate + H(+)</text>
        <dbReference type="Rhea" id="RHEA:30523"/>
        <dbReference type="ChEBI" id="CHEBI:15378"/>
        <dbReference type="ChEBI" id="CHEBI:29985"/>
        <dbReference type="ChEBI" id="CHEBI:37565"/>
        <dbReference type="ChEBI" id="CHEBI:43474"/>
        <dbReference type="ChEBI" id="CHEBI:57922"/>
        <dbReference type="ChEBI" id="CHEBI:58189"/>
        <dbReference type="ChEBI" id="CHEBI:59920"/>
        <dbReference type="EC" id="6.3.2.34"/>
    </reaction>
</comment>
<comment type="cofactor">
    <cofactor evidence="1">
        <name>Mg(2+)</name>
        <dbReference type="ChEBI" id="CHEBI:18420"/>
    </cofactor>
    <cofactor evidence="1">
        <name>Mn(2+)</name>
        <dbReference type="ChEBI" id="CHEBI:29035"/>
    </cofactor>
    <text evidence="1">Binds 2 divalent metal cations per subunit. The ions could be magnesium and/or manganese.</text>
</comment>
<comment type="cofactor">
    <cofactor evidence="1">
        <name>K(+)</name>
        <dbReference type="ChEBI" id="CHEBI:29103"/>
    </cofactor>
    <text evidence="1">Monovalent cation. The ion could be potassium.</text>
</comment>
<comment type="pathway">
    <text evidence="1">Cofactor biosynthesis; coenzyme F420 biosynthesis.</text>
</comment>
<comment type="subunit">
    <text evidence="1">Homodimer.</text>
</comment>
<comment type="similarity">
    <text evidence="1">Belongs to the CofE family.</text>
</comment>